<sequence length="291" mass="31673">MDYLVKALAYDGKVRAYAANTTDTINEAQRRHHTWPTASAAIGRTMTATVMMGAMLKGENKLTVKIEGGGPIGAIIADGNAKGQVRGYVSNPQVHFDLNEHGKLDVRRAVGTSGTLSVVKDIGLKDHFTGQTEIVSGEIGDDFTYYLVSSEQVPSSVGVGVLVNPDNSILAAGGFIIQLLPGTEDAVIERLEKRLSTIEPISKLIEKGMTPEEILEEVLGEKPQILETVPVEFSCNCSKERFANGIISLGKAEIDDMIEQDGQAEAQCHFCNETYVFTKEELEELREEITR</sequence>
<organism>
    <name type="scientific">Bacillus pumilus (strain SAFR-032)</name>
    <dbReference type="NCBI Taxonomy" id="315750"/>
    <lineage>
        <taxon>Bacteria</taxon>
        <taxon>Bacillati</taxon>
        <taxon>Bacillota</taxon>
        <taxon>Bacilli</taxon>
        <taxon>Bacillales</taxon>
        <taxon>Bacillaceae</taxon>
        <taxon>Bacillus</taxon>
    </lineage>
</organism>
<gene>
    <name evidence="1" type="primary">hslO</name>
    <name type="ordered locus">BPUM_0055</name>
</gene>
<reference key="1">
    <citation type="journal article" date="2007" name="PLoS ONE">
        <title>Paradoxical DNA repair and peroxide resistance gene conservation in Bacillus pumilus SAFR-032.</title>
        <authorList>
            <person name="Gioia J."/>
            <person name="Yerrapragada S."/>
            <person name="Qin X."/>
            <person name="Jiang H."/>
            <person name="Igboeli O.C."/>
            <person name="Muzny D."/>
            <person name="Dugan-Rocha S."/>
            <person name="Ding Y."/>
            <person name="Hawes A."/>
            <person name="Liu W."/>
            <person name="Perez L."/>
            <person name="Kovar C."/>
            <person name="Dinh H."/>
            <person name="Lee S."/>
            <person name="Nazareth L."/>
            <person name="Blyth P."/>
            <person name="Holder M."/>
            <person name="Buhay C."/>
            <person name="Tirumalai M.R."/>
            <person name="Liu Y."/>
            <person name="Dasgupta I."/>
            <person name="Bokhetache L."/>
            <person name="Fujita M."/>
            <person name="Karouia F."/>
            <person name="Eswara Moorthy P."/>
            <person name="Siefert J."/>
            <person name="Uzman A."/>
            <person name="Buzumbo P."/>
            <person name="Verma A."/>
            <person name="Zwiya H."/>
            <person name="McWilliams B.D."/>
            <person name="Olowu A."/>
            <person name="Clinkenbeard K.D."/>
            <person name="Newcombe D."/>
            <person name="Golebiewski L."/>
            <person name="Petrosino J.F."/>
            <person name="Nicholson W.L."/>
            <person name="Fox G.E."/>
            <person name="Venkateswaran K."/>
            <person name="Highlander S.K."/>
            <person name="Weinstock G.M."/>
        </authorList>
    </citation>
    <scope>NUCLEOTIDE SEQUENCE [LARGE SCALE GENOMIC DNA]</scope>
    <source>
        <strain>SAFR-032</strain>
    </source>
</reference>
<proteinExistence type="inferred from homology"/>
<feature type="chain" id="PRO_1000057784" description="33 kDa chaperonin">
    <location>
        <begin position="1"/>
        <end position="291"/>
    </location>
</feature>
<feature type="disulfide bond" description="Redox-active" evidence="1">
    <location>
        <begin position="235"/>
        <end position="237"/>
    </location>
</feature>
<feature type="disulfide bond" description="Redox-active" evidence="1">
    <location>
        <begin position="268"/>
        <end position="271"/>
    </location>
</feature>
<comment type="function">
    <text evidence="1">Redox regulated molecular chaperone. Protects both thermally unfolding and oxidatively damaged proteins from irreversible aggregation. Plays an important role in the bacterial defense system toward oxidative stress.</text>
</comment>
<comment type="subcellular location">
    <subcellularLocation>
        <location evidence="1">Cytoplasm</location>
    </subcellularLocation>
</comment>
<comment type="PTM">
    <text evidence="1">Under oxidizing conditions two disulfide bonds are formed involving the reactive cysteines. Under reducing conditions zinc is bound to the reactive cysteines and the protein is inactive.</text>
</comment>
<comment type="similarity">
    <text evidence="1">Belongs to the HSP33 family.</text>
</comment>
<keyword id="KW-0143">Chaperone</keyword>
<keyword id="KW-0963">Cytoplasm</keyword>
<keyword id="KW-1015">Disulfide bond</keyword>
<keyword id="KW-0676">Redox-active center</keyword>
<keyword id="KW-0862">Zinc</keyword>
<dbReference type="EMBL" id="CP000813">
    <property type="protein sequence ID" value="ABV60755.1"/>
    <property type="molecule type" value="Genomic_DNA"/>
</dbReference>
<dbReference type="RefSeq" id="WP_012008671.1">
    <property type="nucleotide sequence ID" value="NZ_VEIS01000022.1"/>
</dbReference>
<dbReference type="SMR" id="A8F938"/>
<dbReference type="STRING" id="315750.BPUM_0055"/>
<dbReference type="GeneID" id="5619294"/>
<dbReference type="KEGG" id="bpu:BPUM_0055"/>
<dbReference type="eggNOG" id="COG1281">
    <property type="taxonomic scope" value="Bacteria"/>
</dbReference>
<dbReference type="HOGENOM" id="CLU_054493_1_0_9"/>
<dbReference type="OrthoDB" id="9776534at2"/>
<dbReference type="Proteomes" id="UP000001355">
    <property type="component" value="Chromosome"/>
</dbReference>
<dbReference type="GO" id="GO:0005737">
    <property type="term" value="C:cytoplasm"/>
    <property type="evidence" value="ECO:0007669"/>
    <property type="project" value="UniProtKB-SubCell"/>
</dbReference>
<dbReference type="GO" id="GO:0044183">
    <property type="term" value="F:protein folding chaperone"/>
    <property type="evidence" value="ECO:0007669"/>
    <property type="project" value="TreeGrafter"/>
</dbReference>
<dbReference type="GO" id="GO:0051082">
    <property type="term" value="F:unfolded protein binding"/>
    <property type="evidence" value="ECO:0007669"/>
    <property type="project" value="UniProtKB-UniRule"/>
</dbReference>
<dbReference type="GO" id="GO:0042026">
    <property type="term" value="P:protein refolding"/>
    <property type="evidence" value="ECO:0007669"/>
    <property type="project" value="TreeGrafter"/>
</dbReference>
<dbReference type="CDD" id="cd00498">
    <property type="entry name" value="Hsp33"/>
    <property type="match status" value="1"/>
</dbReference>
<dbReference type="Gene3D" id="3.55.30.10">
    <property type="entry name" value="Hsp33 domain"/>
    <property type="match status" value="1"/>
</dbReference>
<dbReference type="Gene3D" id="3.90.1280.10">
    <property type="entry name" value="HSP33 redox switch-like"/>
    <property type="match status" value="1"/>
</dbReference>
<dbReference type="HAMAP" id="MF_00117">
    <property type="entry name" value="HslO"/>
    <property type="match status" value="1"/>
</dbReference>
<dbReference type="InterPro" id="IPR000397">
    <property type="entry name" value="Heat_shock_Hsp33"/>
</dbReference>
<dbReference type="InterPro" id="IPR016154">
    <property type="entry name" value="Heat_shock_Hsp33_C"/>
</dbReference>
<dbReference type="InterPro" id="IPR016153">
    <property type="entry name" value="Heat_shock_Hsp33_N"/>
</dbReference>
<dbReference type="NCBIfam" id="NF001033">
    <property type="entry name" value="PRK00114.1"/>
    <property type="match status" value="1"/>
</dbReference>
<dbReference type="PANTHER" id="PTHR30111">
    <property type="entry name" value="33 KDA CHAPERONIN"/>
    <property type="match status" value="1"/>
</dbReference>
<dbReference type="PANTHER" id="PTHR30111:SF1">
    <property type="entry name" value="33 KDA CHAPERONIN"/>
    <property type="match status" value="1"/>
</dbReference>
<dbReference type="Pfam" id="PF01430">
    <property type="entry name" value="HSP33"/>
    <property type="match status" value="1"/>
</dbReference>
<dbReference type="PIRSF" id="PIRSF005261">
    <property type="entry name" value="Heat_shock_Hsp33"/>
    <property type="match status" value="1"/>
</dbReference>
<dbReference type="SUPFAM" id="SSF64397">
    <property type="entry name" value="Hsp33 domain"/>
    <property type="match status" value="1"/>
</dbReference>
<dbReference type="SUPFAM" id="SSF118352">
    <property type="entry name" value="HSP33 redox switch-like"/>
    <property type="match status" value="1"/>
</dbReference>
<protein>
    <recommendedName>
        <fullName evidence="1">33 kDa chaperonin</fullName>
    </recommendedName>
    <alternativeName>
        <fullName evidence="1">Heat shock protein 33 homolog</fullName>
        <shortName evidence="1">HSP33</shortName>
    </alternativeName>
</protein>
<evidence type="ECO:0000255" key="1">
    <source>
        <dbReference type="HAMAP-Rule" id="MF_00117"/>
    </source>
</evidence>
<name>HSLO_BACP2</name>
<accession>A8F938</accession>